<feature type="chain" id="PRO_1000116463" description="UDP-N-acetylglucosamine--N-acetylmuramyl-(pentapeptide) pyrophosphoryl-undecaprenol N-acetylglucosamine transferase">
    <location>
        <begin position="1"/>
        <end position="365"/>
    </location>
</feature>
<feature type="binding site" evidence="1">
    <location>
        <begin position="19"/>
        <end position="21"/>
    </location>
    <ligand>
        <name>UDP-N-acetyl-alpha-D-glucosamine</name>
        <dbReference type="ChEBI" id="CHEBI:57705"/>
    </ligand>
</feature>
<feature type="binding site" evidence="1">
    <location>
        <position position="131"/>
    </location>
    <ligand>
        <name>UDP-N-acetyl-alpha-D-glucosamine</name>
        <dbReference type="ChEBI" id="CHEBI:57705"/>
    </ligand>
</feature>
<feature type="binding site" evidence="1">
    <location>
        <position position="170"/>
    </location>
    <ligand>
        <name>UDP-N-acetyl-alpha-D-glucosamine</name>
        <dbReference type="ChEBI" id="CHEBI:57705"/>
    </ligand>
</feature>
<feature type="binding site" evidence="1">
    <location>
        <position position="201"/>
    </location>
    <ligand>
        <name>UDP-N-acetyl-alpha-D-glucosamine</name>
        <dbReference type="ChEBI" id="CHEBI:57705"/>
    </ligand>
</feature>
<feature type="binding site" evidence="1">
    <location>
        <position position="255"/>
    </location>
    <ligand>
        <name>UDP-N-acetyl-alpha-D-glucosamine</name>
        <dbReference type="ChEBI" id="CHEBI:57705"/>
    </ligand>
</feature>
<feature type="binding site" evidence="1">
    <location>
        <begin position="274"/>
        <end position="279"/>
    </location>
    <ligand>
        <name>UDP-N-acetyl-alpha-D-glucosamine</name>
        <dbReference type="ChEBI" id="CHEBI:57705"/>
    </ligand>
</feature>
<feature type="binding site" evidence="1">
    <location>
        <position position="300"/>
    </location>
    <ligand>
        <name>UDP-N-acetyl-alpha-D-glucosamine</name>
        <dbReference type="ChEBI" id="CHEBI:57705"/>
    </ligand>
</feature>
<keyword id="KW-0131">Cell cycle</keyword>
<keyword id="KW-0132">Cell division</keyword>
<keyword id="KW-0997">Cell inner membrane</keyword>
<keyword id="KW-1003">Cell membrane</keyword>
<keyword id="KW-0133">Cell shape</keyword>
<keyword id="KW-0961">Cell wall biogenesis/degradation</keyword>
<keyword id="KW-0328">Glycosyltransferase</keyword>
<keyword id="KW-0472">Membrane</keyword>
<keyword id="KW-0573">Peptidoglycan synthesis</keyword>
<keyword id="KW-0808">Transferase</keyword>
<proteinExistence type="inferred from homology"/>
<reference key="1">
    <citation type="journal article" date="2008" name="J. Bacteriol.">
        <title>Comparative genome sequence analysis of multidrug-resistant Acinetobacter baumannii.</title>
        <authorList>
            <person name="Adams M.D."/>
            <person name="Goglin K."/>
            <person name="Molyneaux N."/>
            <person name="Hujer K.M."/>
            <person name="Lavender H."/>
            <person name="Jamison J.J."/>
            <person name="MacDonald I.J."/>
            <person name="Martin K.M."/>
            <person name="Russo T."/>
            <person name="Campagnari A.A."/>
            <person name="Hujer A.M."/>
            <person name="Bonomo R.A."/>
            <person name="Gill S.R."/>
        </authorList>
    </citation>
    <scope>NUCLEOTIDE SEQUENCE [LARGE SCALE GENOMIC DNA]</scope>
    <source>
        <strain>AB307-0294</strain>
    </source>
</reference>
<dbReference type="EC" id="2.4.1.227" evidence="1"/>
<dbReference type="EMBL" id="CP001172">
    <property type="protein sequence ID" value="ACJ56494.1"/>
    <property type="molecule type" value="Genomic_DNA"/>
</dbReference>
<dbReference type="RefSeq" id="WP_000132435.1">
    <property type="nucleotide sequence ID" value="NZ_CP001172.1"/>
</dbReference>
<dbReference type="SMR" id="B7GV73"/>
<dbReference type="CAZy" id="GT28">
    <property type="family name" value="Glycosyltransferase Family 28"/>
</dbReference>
<dbReference type="GeneID" id="92895579"/>
<dbReference type="HOGENOM" id="CLU_037404_2_0_6"/>
<dbReference type="UniPathway" id="UPA00219"/>
<dbReference type="Proteomes" id="UP000006924">
    <property type="component" value="Chromosome"/>
</dbReference>
<dbReference type="GO" id="GO:0005886">
    <property type="term" value="C:plasma membrane"/>
    <property type="evidence" value="ECO:0007669"/>
    <property type="project" value="UniProtKB-SubCell"/>
</dbReference>
<dbReference type="GO" id="GO:0051991">
    <property type="term" value="F:UDP-N-acetyl-D-glucosamine:N-acetylmuramoyl-L-alanyl-D-glutamyl-meso-2,6-diaminopimelyl-D-alanyl-D-alanine-diphosphoundecaprenol 4-beta-N-acetylglucosaminlytransferase activity"/>
    <property type="evidence" value="ECO:0007669"/>
    <property type="project" value="RHEA"/>
</dbReference>
<dbReference type="GO" id="GO:0050511">
    <property type="term" value="F:undecaprenyldiphospho-muramoylpentapeptide beta-N-acetylglucosaminyltransferase activity"/>
    <property type="evidence" value="ECO:0007669"/>
    <property type="project" value="UniProtKB-UniRule"/>
</dbReference>
<dbReference type="GO" id="GO:0005975">
    <property type="term" value="P:carbohydrate metabolic process"/>
    <property type="evidence" value="ECO:0007669"/>
    <property type="project" value="InterPro"/>
</dbReference>
<dbReference type="GO" id="GO:0051301">
    <property type="term" value="P:cell division"/>
    <property type="evidence" value="ECO:0007669"/>
    <property type="project" value="UniProtKB-KW"/>
</dbReference>
<dbReference type="GO" id="GO:0071555">
    <property type="term" value="P:cell wall organization"/>
    <property type="evidence" value="ECO:0007669"/>
    <property type="project" value="UniProtKB-KW"/>
</dbReference>
<dbReference type="GO" id="GO:0030259">
    <property type="term" value="P:lipid glycosylation"/>
    <property type="evidence" value="ECO:0007669"/>
    <property type="project" value="UniProtKB-UniRule"/>
</dbReference>
<dbReference type="GO" id="GO:0009252">
    <property type="term" value="P:peptidoglycan biosynthetic process"/>
    <property type="evidence" value="ECO:0007669"/>
    <property type="project" value="UniProtKB-UniRule"/>
</dbReference>
<dbReference type="GO" id="GO:0008360">
    <property type="term" value="P:regulation of cell shape"/>
    <property type="evidence" value="ECO:0007669"/>
    <property type="project" value="UniProtKB-KW"/>
</dbReference>
<dbReference type="CDD" id="cd03785">
    <property type="entry name" value="GT28_MurG"/>
    <property type="match status" value="1"/>
</dbReference>
<dbReference type="Gene3D" id="3.40.50.2000">
    <property type="entry name" value="Glycogen Phosphorylase B"/>
    <property type="match status" value="2"/>
</dbReference>
<dbReference type="HAMAP" id="MF_00033">
    <property type="entry name" value="MurG"/>
    <property type="match status" value="1"/>
</dbReference>
<dbReference type="InterPro" id="IPR006009">
    <property type="entry name" value="GlcNAc_MurG"/>
</dbReference>
<dbReference type="InterPro" id="IPR007235">
    <property type="entry name" value="Glyco_trans_28_C"/>
</dbReference>
<dbReference type="InterPro" id="IPR004276">
    <property type="entry name" value="GlycoTrans_28_N"/>
</dbReference>
<dbReference type="NCBIfam" id="TIGR01133">
    <property type="entry name" value="murG"/>
    <property type="match status" value="1"/>
</dbReference>
<dbReference type="PANTHER" id="PTHR21015:SF22">
    <property type="entry name" value="GLYCOSYLTRANSFERASE"/>
    <property type="match status" value="1"/>
</dbReference>
<dbReference type="PANTHER" id="PTHR21015">
    <property type="entry name" value="UDP-N-ACETYLGLUCOSAMINE--N-ACETYLMURAMYL-(PENTAPEPTIDE) PYROPHOSPHORYL-UNDECAPRENOL N-ACETYLGLUCOSAMINE TRANSFERASE 1"/>
    <property type="match status" value="1"/>
</dbReference>
<dbReference type="Pfam" id="PF04101">
    <property type="entry name" value="Glyco_tran_28_C"/>
    <property type="match status" value="1"/>
</dbReference>
<dbReference type="Pfam" id="PF03033">
    <property type="entry name" value="Glyco_transf_28"/>
    <property type="match status" value="1"/>
</dbReference>
<dbReference type="SUPFAM" id="SSF53756">
    <property type="entry name" value="UDP-Glycosyltransferase/glycogen phosphorylase"/>
    <property type="match status" value="1"/>
</dbReference>
<organism>
    <name type="scientific">Acinetobacter baumannii (strain AB307-0294)</name>
    <dbReference type="NCBI Taxonomy" id="557600"/>
    <lineage>
        <taxon>Bacteria</taxon>
        <taxon>Pseudomonadati</taxon>
        <taxon>Pseudomonadota</taxon>
        <taxon>Gammaproteobacteria</taxon>
        <taxon>Moraxellales</taxon>
        <taxon>Moraxellaceae</taxon>
        <taxon>Acinetobacter</taxon>
        <taxon>Acinetobacter calcoaceticus/baumannii complex</taxon>
    </lineage>
</organism>
<name>MURG_ACIB3</name>
<gene>
    <name evidence="1" type="primary">murG</name>
    <name type="ordered locus">ABBFA_000145</name>
</gene>
<accession>B7GV73</accession>
<protein>
    <recommendedName>
        <fullName evidence="1">UDP-N-acetylglucosamine--N-acetylmuramyl-(pentapeptide) pyrophosphoryl-undecaprenol N-acetylglucosamine transferase</fullName>
        <ecNumber evidence="1">2.4.1.227</ecNumber>
    </recommendedName>
    <alternativeName>
        <fullName evidence="1">Undecaprenyl-PP-MurNAc-pentapeptide-UDPGlcNAc GlcNAc transferase</fullName>
    </alternativeName>
</protein>
<sequence>MTDSQQSKPKHVMMMAAGTGGHVFPALAVAKQLQQQGCQVSWLATPTGMENRLLKDQNIPIYQIDIQGVRGNGVIRKLAAPFKILKATFSAMRYMKQLKVDAVAGFGGYVAGPGGLAARLLGIPVLIHEQNAVAGFTNAQLSRVAKVVCEAFPNTFPASEKVVTTGNPVRREITDILSPKWRYDEREQAGKPLNILIVGGSLGAKALNERLPPALKQLEVPLNIFHQCGQQQVEATQALYADAPANLTVQVLPFIEDMAKAYSEADLIICRAGALTVTEVATAGVAAVFVPLPIAVDDHQTANAKFLADVGAAKICQQSTMTPEVLNQLFTTLMNRQLLTEMAVKARQHAQPNATQHVVDLIQKM</sequence>
<comment type="function">
    <text evidence="1">Cell wall formation. Catalyzes the transfer of a GlcNAc subunit on undecaprenyl-pyrophosphoryl-MurNAc-pentapeptide (lipid intermediate I) to form undecaprenyl-pyrophosphoryl-MurNAc-(pentapeptide)GlcNAc (lipid intermediate II).</text>
</comment>
<comment type="catalytic activity">
    <reaction evidence="1">
        <text>di-trans,octa-cis-undecaprenyl diphospho-N-acetyl-alpha-D-muramoyl-L-alanyl-D-glutamyl-meso-2,6-diaminopimeloyl-D-alanyl-D-alanine + UDP-N-acetyl-alpha-D-glucosamine = di-trans,octa-cis-undecaprenyl diphospho-[N-acetyl-alpha-D-glucosaminyl-(1-&gt;4)]-N-acetyl-alpha-D-muramoyl-L-alanyl-D-glutamyl-meso-2,6-diaminopimeloyl-D-alanyl-D-alanine + UDP + H(+)</text>
        <dbReference type="Rhea" id="RHEA:31227"/>
        <dbReference type="ChEBI" id="CHEBI:15378"/>
        <dbReference type="ChEBI" id="CHEBI:57705"/>
        <dbReference type="ChEBI" id="CHEBI:58223"/>
        <dbReference type="ChEBI" id="CHEBI:61387"/>
        <dbReference type="ChEBI" id="CHEBI:61388"/>
        <dbReference type="EC" id="2.4.1.227"/>
    </reaction>
</comment>
<comment type="pathway">
    <text evidence="1">Cell wall biogenesis; peptidoglycan biosynthesis.</text>
</comment>
<comment type="subcellular location">
    <subcellularLocation>
        <location evidence="1">Cell inner membrane</location>
        <topology evidence="1">Peripheral membrane protein</topology>
        <orientation evidence="1">Cytoplasmic side</orientation>
    </subcellularLocation>
</comment>
<comment type="similarity">
    <text evidence="1">Belongs to the glycosyltransferase 28 family. MurG subfamily.</text>
</comment>
<evidence type="ECO:0000255" key="1">
    <source>
        <dbReference type="HAMAP-Rule" id="MF_00033"/>
    </source>
</evidence>